<organism>
    <name type="scientific">Mycobacterium tuberculosis (strain ATCC 25618 / H37Rv)</name>
    <dbReference type="NCBI Taxonomy" id="83332"/>
    <lineage>
        <taxon>Bacteria</taxon>
        <taxon>Bacillati</taxon>
        <taxon>Actinomycetota</taxon>
        <taxon>Actinomycetes</taxon>
        <taxon>Mycobacteriales</taxon>
        <taxon>Mycobacteriaceae</taxon>
        <taxon>Mycobacterium</taxon>
        <taxon>Mycobacterium tuberculosis complex</taxon>
    </lineage>
</organism>
<feature type="chain" id="PRO_0000458122" description="Isonitrile lipopeptide synthase">
    <location>
        <begin position="1"/>
        <end position="2512"/>
    </location>
</feature>
<feature type="domain" description="Carrier 1" evidence="2">
    <location>
        <begin position="935"/>
        <end position="1003"/>
    </location>
</feature>
<feature type="domain" description="Carrier 2" evidence="4">
    <location>
        <begin position="1984"/>
        <end position="2059"/>
    </location>
</feature>
<feature type="domain" description="Thioester reductase (TE)" evidence="3">
    <location>
        <begin position="2112"/>
        <end position="2372"/>
    </location>
</feature>
<feature type="modified residue" description="O-(pantetheine 4'-phosphoryl)serine" evidence="2">
    <location>
        <position position="963"/>
    </location>
</feature>
<feature type="modified residue" description="O-(pantetheine 4'-phosphoryl)serine" evidence="4">
    <location>
        <position position="2019"/>
    </location>
</feature>
<feature type="strand" evidence="15">
    <location>
        <begin position="2076"/>
        <end position="2079"/>
    </location>
</feature>
<feature type="helix" evidence="15">
    <location>
        <begin position="2080"/>
        <end position="2082"/>
    </location>
</feature>
<feature type="helix" evidence="15">
    <location>
        <begin position="2085"/>
        <end position="2087"/>
    </location>
</feature>
<feature type="helix" evidence="15">
    <location>
        <begin position="2091"/>
        <end position="2098"/>
    </location>
</feature>
<feature type="strand" evidence="15">
    <location>
        <begin position="2109"/>
        <end position="2113"/>
    </location>
</feature>
<feature type="helix" evidence="15">
    <location>
        <begin position="2118"/>
        <end position="2130"/>
    </location>
</feature>
<feature type="strand" evidence="15">
    <location>
        <begin position="2136"/>
        <end position="2141"/>
    </location>
</feature>
<feature type="strand" evidence="15">
    <location>
        <begin position="2143"/>
        <end position="2145"/>
    </location>
</feature>
<feature type="helix" evidence="15">
    <location>
        <begin position="2146"/>
        <end position="2156"/>
    </location>
</feature>
<feature type="helix" evidence="15">
    <location>
        <begin position="2162"/>
        <end position="2172"/>
    </location>
</feature>
<feature type="turn" evidence="15">
    <location>
        <begin position="2173"/>
        <end position="2175"/>
    </location>
</feature>
<feature type="strand" evidence="15">
    <location>
        <begin position="2176"/>
        <end position="2180"/>
    </location>
</feature>
<feature type="helix" evidence="15">
    <location>
        <begin position="2186"/>
        <end position="2189"/>
    </location>
</feature>
<feature type="helix" evidence="15">
    <location>
        <begin position="2192"/>
        <end position="2201"/>
    </location>
</feature>
<feature type="strand" evidence="15">
    <location>
        <begin position="2204"/>
        <end position="2207"/>
    </location>
</feature>
<feature type="strand" evidence="14">
    <location>
        <begin position="2213"/>
        <end position="2216"/>
    </location>
</feature>
<feature type="helix" evidence="15">
    <location>
        <begin position="2221"/>
        <end position="2236"/>
    </location>
</feature>
<feature type="strand" evidence="15">
    <location>
        <begin position="2237"/>
        <end position="2239"/>
    </location>
</feature>
<feature type="strand" evidence="15">
    <location>
        <begin position="2243"/>
        <end position="2248"/>
    </location>
</feature>
<feature type="helix" evidence="15">
    <location>
        <begin position="2249"/>
        <end position="2252"/>
    </location>
</feature>
<feature type="turn" evidence="15">
    <location>
        <begin position="2257"/>
        <end position="2259"/>
    </location>
</feature>
<feature type="strand" evidence="15">
    <location>
        <begin position="2262"/>
        <end position="2264"/>
    </location>
</feature>
<feature type="helix" evidence="15">
    <location>
        <begin position="2266"/>
        <end position="2269"/>
    </location>
</feature>
<feature type="strand" evidence="15">
    <location>
        <begin position="2272"/>
        <end position="2275"/>
    </location>
</feature>
<feature type="helix" evidence="15">
    <location>
        <begin position="2279"/>
        <end position="2301"/>
    </location>
</feature>
<feature type="strand" evidence="15">
    <location>
        <begin position="2305"/>
        <end position="2310"/>
    </location>
</feature>
<feature type="strand" evidence="15">
    <location>
        <begin position="2312"/>
        <end position="2314"/>
    </location>
</feature>
<feature type="strand" evidence="15">
    <location>
        <begin position="2317"/>
        <end position="2319"/>
    </location>
</feature>
<feature type="helix" evidence="15">
    <location>
        <begin position="2328"/>
        <end position="2339"/>
    </location>
</feature>
<feature type="strand" evidence="15">
    <location>
        <begin position="2341"/>
        <end position="2344"/>
    </location>
</feature>
<feature type="strand" evidence="15">
    <location>
        <begin position="2362"/>
        <end position="2364"/>
    </location>
</feature>
<feature type="helix" evidence="15">
    <location>
        <begin position="2365"/>
        <end position="2376"/>
    </location>
</feature>
<feature type="strand" evidence="15">
    <location>
        <begin position="2387"/>
        <end position="2392"/>
    </location>
</feature>
<feature type="helix" evidence="15">
    <location>
        <begin position="2402"/>
        <end position="2411"/>
    </location>
</feature>
<feature type="strand" evidence="15">
    <location>
        <begin position="2417"/>
        <end position="2421"/>
    </location>
</feature>
<feature type="helix" evidence="15">
    <location>
        <begin position="2422"/>
        <end position="2434"/>
    </location>
</feature>
<feature type="helix" evidence="15">
    <location>
        <begin position="2438"/>
        <end position="2442"/>
    </location>
</feature>
<feature type="helix" evidence="15">
    <location>
        <begin position="2446"/>
        <end position="2449"/>
    </location>
</feature>
<feature type="helix" evidence="15">
    <location>
        <begin position="2471"/>
        <end position="2480"/>
    </location>
</feature>
<feature type="strand" evidence="15">
    <location>
        <begin position="2486"/>
        <end position="2488"/>
    </location>
</feature>
<feature type="helix" evidence="15">
    <location>
        <begin position="2496"/>
        <end position="2508"/>
    </location>
</feature>
<comment type="function">
    <text evidence="1 6">Nonribosomal peptide synthetase (NRPS) involved in the biosynthesis of a unique class of isonitrile lipopeptides (INLPs) that seem to function as virulence factors in M.tuberculosis and to play a role in metal acquisition (PubMed:28634299). Catalyzes the final step in the pathway, i.e. the condensation of a (3R)-3-isocyanyl-fatty acyl-[ACP] to both amino groups of a lysine, producing isonitrile lipopeptides (By similarity).</text>
</comment>
<comment type="catalytic activity">
    <reaction evidence="1">
        <text>2 a (3R)-3-isocyanyl-fatty acyl-[ACP] + L-lysine + ATP + 2 NADPH = an isonitrile lipopeptide + 2 holo-[ACP] + AMP + diphosphate + 2 NADP(+)</text>
        <dbReference type="Rhea" id="RHEA:75551"/>
        <dbReference type="Rhea" id="RHEA-COMP:9685"/>
        <dbReference type="Rhea" id="RHEA-COMP:18454"/>
        <dbReference type="ChEBI" id="CHEBI:30616"/>
        <dbReference type="ChEBI" id="CHEBI:32551"/>
        <dbReference type="ChEBI" id="CHEBI:33019"/>
        <dbReference type="ChEBI" id="CHEBI:57783"/>
        <dbReference type="ChEBI" id="CHEBI:58349"/>
        <dbReference type="ChEBI" id="CHEBI:64479"/>
        <dbReference type="ChEBI" id="CHEBI:194105"/>
        <dbReference type="ChEBI" id="CHEBI:194107"/>
        <dbReference type="ChEBI" id="CHEBI:456215"/>
    </reaction>
    <physiologicalReaction direction="left-to-right" evidence="1">
        <dbReference type="Rhea" id="RHEA:75552"/>
    </physiologicalReaction>
</comment>
<comment type="cofactor">
    <cofactor evidence="4">
        <name>pantetheine 4'-phosphate</name>
        <dbReference type="ChEBI" id="CHEBI:47942"/>
    </cofactor>
</comment>
<comment type="domain">
    <text evidence="8 9">Contains 7 domains: 2 C (condensation) domains, 2 A (adenylation) domains, 2 T (thiolation) domains, and one R (reduction) domain at its C-terminus. The first T domain likely acts as a lyine-specific peptidyl-carrier protein, and carries a lyine residue that is transferred to it by the first A domain. The C domain catalyzes the condensation of two isonitrile-containing moieties to both amino groups of the lysine bound to the T domain, a rare activity in nonribosomal peptide biosynthesis. Finally, the R domain catalyzes a four-electron thioester reduction, releasing the product from the NRPS and forming a terminal alcohol product.</text>
</comment>
<comment type="disruption phenotype">
    <text evidence="5">Cells lacking this gene are shown to be highly attenuated in a mouse tuberculosis model.</text>
</comment>
<comment type="similarity">
    <text evidence="7">Belongs to the ATP-dependent AMP-binding enzyme family.</text>
</comment>
<protein>
    <recommendedName>
        <fullName evidence="9">Isonitrile lipopeptide synthase</fullName>
        <ecNumber evidence="1">2.3.1.-</ecNumber>
        <ecNumber evidence="1">6.2.1.-</ecNumber>
    </recommendedName>
</protein>
<reference key="1">
    <citation type="journal article" date="1998" name="Nature">
        <title>Deciphering the biology of Mycobacterium tuberculosis from the complete genome sequence.</title>
        <authorList>
            <person name="Cole S.T."/>
            <person name="Brosch R."/>
            <person name="Parkhill J."/>
            <person name="Garnier T."/>
            <person name="Churcher C.M."/>
            <person name="Harris D.E."/>
            <person name="Gordon S.V."/>
            <person name="Eiglmeier K."/>
            <person name="Gas S."/>
            <person name="Barry C.E. III"/>
            <person name="Tekaia F."/>
            <person name="Badcock K."/>
            <person name="Basham D."/>
            <person name="Brown D."/>
            <person name="Chillingworth T."/>
            <person name="Connor R."/>
            <person name="Davies R.M."/>
            <person name="Devlin K."/>
            <person name="Feltwell T."/>
            <person name="Gentles S."/>
            <person name="Hamlin N."/>
            <person name="Holroyd S."/>
            <person name="Hornsby T."/>
            <person name="Jagels K."/>
            <person name="Krogh A."/>
            <person name="McLean J."/>
            <person name="Moule S."/>
            <person name="Murphy L.D."/>
            <person name="Oliver S."/>
            <person name="Osborne J."/>
            <person name="Quail M.A."/>
            <person name="Rajandream M.A."/>
            <person name="Rogers J."/>
            <person name="Rutter S."/>
            <person name="Seeger K."/>
            <person name="Skelton S."/>
            <person name="Squares S."/>
            <person name="Squares R."/>
            <person name="Sulston J.E."/>
            <person name="Taylor K."/>
            <person name="Whitehead S."/>
            <person name="Barrell B.G."/>
        </authorList>
    </citation>
    <scope>NUCLEOTIDE SEQUENCE [LARGE SCALE GENOMIC DNA]</scope>
    <source>
        <strain>ATCC 25618 / H37Rv</strain>
    </source>
</reference>
<reference key="2">
    <citation type="journal article" date="2003" name="Proc. Natl. Acad. Sci. U.S.A.">
        <title>Genetic requirements for mycobacterial survival during infection.</title>
        <authorList>
            <person name="Sassetti C.M."/>
            <person name="Rubin E.J."/>
        </authorList>
    </citation>
    <scope>DISRUPTION PHENOTYPE</scope>
    <source>
        <strain>ATCC 25618 / H37Rv</strain>
    </source>
</reference>
<reference evidence="13" key="3">
    <citation type="journal article" date="2011" name="Mol. Cell. Proteomics">
        <title>Proteogenomic analysis of Mycobacterium tuberculosis by high resolution mass spectrometry.</title>
        <authorList>
            <person name="Kelkar D.S."/>
            <person name="Kumar D."/>
            <person name="Kumar P."/>
            <person name="Balakrishnan L."/>
            <person name="Muthusamy B."/>
            <person name="Yadav A.K."/>
            <person name="Shrivastava P."/>
            <person name="Marimuthu A."/>
            <person name="Anand S."/>
            <person name="Sundaram H."/>
            <person name="Kingsbury R."/>
            <person name="Harsha H.C."/>
            <person name="Nair B."/>
            <person name="Prasad T.S."/>
            <person name="Chauhan D.S."/>
            <person name="Katoch K."/>
            <person name="Katoch V.M."/>
            <person name="Kumar P."/>
            <person name="Chaerkady R."/>
            <person name="Ramachandran S."/>
            <person name="Dash D."/>
            <person name="Pandey A."/>
        </authorList>
    </citation>
    <scope>IDENTIFICATION BY MASS SPECTROMETRY [LARGE SCALE ANALYSIS]</scope>
</reference>
<reference key="4">
    <citation type="journal article" date="2017" name="Proc. Natl. Acad. Sci. U.S.A.">
        <title>Biosynthesis of isonitrile lipopeptides by conserved nonribosomal peptide synthetase gene clusters in Actinobacteria.</title>
        <authorList>
            <person name="Harris N.C."/>
            <person name="Sato M."/>
            <person name="Herman N.A."/>
            <person name="Twigg F."/>
            <person name="Cai W."/>
            <person name="Liu J."/>
            <person name="Zhu X."/>
            <person name="Downey J."/>
            <person name="Khalaf R."/>
            <person name="Martin J."/>
            <person name="Koshino H."/>
            <person name="Zhang W."/>
        </authorList>
    </citation>
    <scope>FUNCTION</scope>
    <scope>DOMAIN</scope>
    <source>
        <strain>ATCC 25618 / H37Rv</strain>
    </source>
</reference>
<reference evidence="11" key="5">
    <citation type="journal article" date="2012" name="Proc. Natl. Acad. Sci. U.S.A.">
        <title>Nonprocessive [2 + 2]e- off-loading reductase domains from mycobacterial nonribosomal peptide synthetases.</title>
        <authorList>
            <person name="Chhabra A."/>
            <person name="Haque A.S."/>
            <person name="Pal R.K."/>
            <person name="Goyal A."/>
            <person name="Rai R."/>
            <person name="Joshi S."/>
            <person name="Panjikar S."/>
            <person name="Pasha S."/>
            <person name="Sankaranarayanan R."/>
            <person name="Gokhale R.S."/>
        </authorList>
    </citation>
    <scope>X-RAY CRYSTALLOGRAPHY (2.30 ANGSTROMS) OF 2056-2512</scope>
    <scope>DOMAIN</scope>
</reference>
<reference evidence="12" key="6">
    <citation type="submission" date="2014-07" db="PDB data bank">
        <title>High resolution structure of R-domain of nonribosomal peptide synthetase from Mycobacterium tuberculosis.</title>
        <authorList>
            <person name="Patel K.D."/>
            <person name="Haque A.S."/>
            <person name="Sankaranarayanan R."/>
        </authorList>
    </citation>
    <scope>X-RAY CRYSTALLOGRAPHY (1.81 ANGSTROMS) OF 2056-2512</scope>
</reference>
<evidence type="ECO:0000250" key="1">
    <source>
        <dbReference type="UniProtKB" id="B2HKL9"/>
    </source>
</evidence>
<evidence type="ECO:0000250" key="2">
    <source>
        <dbReference type="UniProtKB" id="P0DX16"/>
    </source>
</evidence>
<evidence type="ECO:0000255" key="3"/>
<evidence type="ECO:0000255" key="4">
    <source>
        <dbReference type="PROSITE-ProRule" id="PRU00258"/>
    </source>
</evidence>
<evidence type="ECO:0000269" key="5">
    <source>
    </source>
</evidence>
<evidence type="ECO:0000269" key="6">
    <source>
    </source>
</evidence>
<evidence type="ECO:0000305" key="7"/>
<evidence type="ECO:0000305" key="8">
    <source>
    </source>
</evidence>
<evidence type="ECO:0000305" key="9">
    <source>
    </source>
</evidence>
<evidence type="ECO:0000312" key="10">
    <source>
        <dbReference type="EMBL" id="CCP42826.1"/>
    </source>
</evidence>
<evidence type="ECO:0007744" key="11">
    <source>
        <dbReference type="PDB" id="4DQV"/>
    </source>
</evidence>
<evidence type="ECO:0007744" key="12">
    <source>
        <dbReference type="PDB" id="4U5Q"/>
    </source>
</evidence>
<evidence type="ECO:0007744" key="13">
    <source>
    </source>
</evidence>
<evidence type="ECO:0007829" key="14">
    <source>
        <dbReference type="PDB" id="4DQV"/>
    </source>
</evidence>
<evidence type="ECO:0007829" key="15">
    <source>
        <dbReference type="PDB" id="4U5Q"/>
    </source>
</evidence>
<name>INLPA_MYCTU</name>
<dbReference type="EC" id="2.3.1.-" evidence="1"/>
<dbReference type="EC" id="6.2.1.-" evidence="1"/>
<dbReference type="EMBL" id="AL123456">
    <property type="protein sequence ID" value="CCP42826.1"/>
    <property type="molecule type" value="Genomic_DNA"/>
</dbReference>
<dbReference type="RefSeq" id="NP_214615.1">
    <property type="nucleotide sequence ID" value="NC_000962.3"/>
</dbReference>
<dbReference type="RefSeq" id="WP_003400794.1">
    <property type="nucleotide sequence ID" value="NZ_NVQJ01000053.1"/>
</dbReference>
<dbReference type="PDB" id="4DQV">
    <property type="method" value="X-ray"/>
    <property type="resolution" value="2.30 A"/>
    <property type="chains" value="A=2056-2512"/>
</dbReference>
<dbReference type="PDB" id="4U5Q">
    <property type="method" value="X-ray"/>
    <property type="resolution" value="1.81 A"/>
    <property type="chains" value="A/B=2056-2512"/>
</dbReference>
<dbReference type="PDBsum" id="4DQV"/>
<dbReference type="PDBsum" id="4U5Q"/>
<dbReference type="SMR" id="Q10896"/>
<dbReference type="STRING" id="83332.Rv0101"/>
<dbReference type="PaxDb" id="83332-Rv0101"/>
<dbReference type="GeneID" id="886951"/>
<dbReference type="KEGG" id="mtu:Rv0101"/>
<dbReference type="KEGG" id="mtv:RVBD_0101"/>
<dbReference type="PATRIC" id="fig|83332.111.peg.115"/>
<dbReference type="TubercuList" id="Rv0101"/>
<dbReference type="eggNOG" id="COG1020">
    <property type="taxonomic scope" value="Bacteria"/>
</dbReference>
<dbReference type="eggNOG" id="COG3320">
    <property type="taxonomic scope" value="Bacteria"/>
</dbReference>
<dbReference type="InParanoid" id="Q10896"/>
<dbReference type="OrthoDB" id="4506464at2"/>
<dbReference type="PhylomeDB" id="Q10896"/>
<dbReference type="EvolutionaryTrace" id="Q10896"/>
<dbReference type="PHI-base" id="PHI:8603"/>
<dbReference type="Proteomes" id="UP000001584">
    <property type="component" value="Chromosome"/>
</dbReference>
<dbReference type="GO" id="GO:0005737">
    <property type="term" value="C:cytoplasm"/>
    <property type="evidence" value="ECO:0000318"/>
    <property type="project" value="GO_Central"/>
</dbReference>
<dbReference type="GO" id="GO:0005829">
    <property type="term" value="C:cytosol"/>
    <property type="evidence" value="ECO:0007005"/>
    <property type="project" value="MTBBASE"/>
</dbReference>
<dbReference type="GO" id="GO:0009274">
    <property type="term" value="C:peptidoglycan-based cell wall"/>
    <property type="evidence" value="ECO:0007005"/>
    <property type="project" value="MTBBASE"/>
</dbReference>
<dbReference type="GO" id="GO:0005886">
    <property type="term" value="C:plasma membrane"/>
    <property type="evidence" value="ECO:0007005"/>
    <property type="project" value="MTBBASE"/>
</dbReference>
<dbReference type="GO" id="GO:0005524">
    <property type="term" value="F:ATP binding"/>
    <property type="evidence" value="ECO:0007669"/>
    <property type="project" value="UniProtKB-KW"/>
</dbReference>
<dbReference type="GO" id="GO:0016874">
    <property type="term" value="F:ligase activity"/>
    <property type="evidence" value="ECO:0007669"/>
    <property type="project" value="UniProtKB-KW"/>
</dbReference>
<dbReference type="GO" id="GO:0031177">
    <property type="term" value="F:phosphopantetheine binding"/>
    <property type="evidence" value="ECO:0000318"/>
    <property type="project" value="GO_Central"/>
</dbReference>
<dbReference type="GO" id="GO:0016740">
    <property type="term" value="F:transferase activity"/>
    <property type="evidence" value="ECO:0007669"/>
    <property type="project" value="UniProtKB-KW"/>
</dbReference>
<dbReference type="GO" id="GO:0043041">
    <property type="term" value="P:amino acid activation for nonribosomal peptide biosynthetic process"/>
    <property type="evidence" value="ECO:0000318"/>
    <property type="project" value="GO_Central"/>
</dbReference>
<dbReference type="GO" id="GO:0008610">
    <property type="term" value="P:lipid biosynthetic process"/>
    <property type="evidence" value="ECO:0007669"/>
    <property type="project" value="UniProtKB-ARBA"/>
</dbReference>
<dbReference type="GO" id="GO:0044550">
    <property type="term" value="P:secondary metabolite biosynthetic process"/>
    <property type="evidence" value="ECO:0000318"/>
    <property type="project" value="GO_Central"/>
</dbReference>
<dbReference type="CDD" id="cd17652">
    <property type="entry name" value="A_NRPS_CmdD_like"/>
    <property type="match status" value="1"/>
</dbReference>
<dbReference type="CDD" id="cd19540">
    <property type="entry name" value="LCL_NRPS-like"/>
    <property type="match status" value="1"/>
</dbReference>
<dbReference type="CDD" id="cd05235">
    <property type="entry name" value="SDR_e1"/>
    <property type="match status" value="1"/>
</dbReference>
<dbReference type="FunFam" id="3.30.300.30:FF:000010">
    <property type="entry name" value="Enterobactin synthetase component F"/>
    <property type="match status" value="1"/>
</dbReference>
<dbReference type="FunFam" id="3.30.559.10:FF:000012">
    <property type="entry name" value="Non-ribosomal peptide synthetase"/>
    <property type="match status" value="1"/>
</dbReference>
<dbReference type="FunFam" id="3.30.559.30:FF:000001">
    <property type="entry name" value="Non-ribosomal peptide synthetase"/>
    <property type="match status" value="1"/>
</dbReference>
<dbReference type="FunFam" id="3.40.50.12780:FF:000012">
    <property type="entry name" value="Non-ribosomal peptide synthetase"/>
    <property type="match status" value="1"/>
</dbReference>
<dbReference type="FunFam" id="2.30.38.10:FF:000001">
    <property type="entry name" value="Non-ribosomal peptide synthetase PvdI"/>
    <property type="match status" value="1"/>
</dbReference>
<dbReference type="FunFam" id="1.10.1200.10:FF:000005">
    <property type="entry name" value="Nonribosomal peptide synthetase 1"/>
    <property type="match status" value="1"/>
</dbReference>
<dbReference type="FunFam" id="3.40.50.720:FF:000670">
    <property type="entry name" value="Probable peptide synthetase nrp"/>
    <property type="match status" value="1"/>
</dbReference>
<dbReference type="Gene3D" id="3.30.300.30">
    <property type="match status" value="2"/>
</dbReference>
<dbReference type="Gene3D" id="1.10.1200.10">
    <property type="entry name" value="ACP-like"/>
    <property type="match status" value="2"/>
</dbReference>
<dbReference type="Gene3D" id="3.30.559.10">
    <property type="entry name" value="Chloramphenicol acetyltransferase-like domain"/>
    <property type="match status" value="2"/>
</dbReference>
<dbReference type="Gene3D" id="3.40.50.12780">
    <property type="entry name" value="N-terminal domain of ligase-like"/>
    <property type="match status" value="2"/>
</dbReference>
<dbReference type="Gene3D" id="3.40.50.720">
    <property type="entry name" value="NAD(P)-binding Rossmann-like Domain"/>
    <property type="match status" value="1"/>
</dbReference>
<dbReference type="Gene3D" id="3.30.559.30">
    <property type="entry name" value="Nonribosomal peptide synthetase, condensation domain"/>
    <property type="match status" value="2"/>
</dbReference>
<dbReference type="InterPro" id="IPR010071">
    <property type="entry name" value="AA_adenyl_dom"/>
</dbReference>
<dbReference type="InterPro" id="IPR036736">
    <property type="entry name" value="ACP-like_sf"/>
</dbReference>
<dbReference type="InterPro" id="IPR025110">
    <property type="entry name" value="AMP-bd_C"/>
</dbReference>
<dbReference type="InterPro" id="IPR045851">
    <property type="entry name" value="AMP-bd_C_sf"/>
</dbReference>
<dbReference type="InterPro" id="IPR020845">
    <property type="entry name" value="AMP-binding_CS"/>
</dbReference>
<dbReference type="InterPro" id="IPR000873">
    <property type="entry name" value="AMP-dep_synth/lig_dom"/>
</dbReference>
<dbReference type="InterPro" id="IPR042099">
    <property type="entry name" value="ANL_N_sf"/>
</dbReference>
<dbReference type="InterPro" id="IPR023213">
    <property type="entry name" value="CAT-like_dom_sf"/>
</dbReference>
<dbReference type="InterPro" id="IPR001242">
    <property type="entry name" value="Condensatn"/>
</dbReference>
<dbReference type="InterPro" id="IPR013120">
    <property type="entry name" value="Far_NAD-bd"/>
</dbReference>
<dbReference type="InterPro" id="IPR036291">
    <property type="entry name" value="NAD(P)-bd_dom_sf"/>
</dbReference>
<dbReference type="InterPro" id="IPR020806">
    <property type="entry name" value="PKS_PP-bd"/>
</dbReference>
<dbReference type="InterPro" id="IPR009081">
    <property type="entry name" value="PP-bd_ACP"/>
</dbReference>
<dbReference type="InterPro" id="IPR006162">
    <property type="entry name" value="Ppantetheine_attach_site"/>
</dbReference>
<dbReference type="InterPro" id="IPR010080">
    <property type="entry name" value="Thioester_reductase-like_dom"/>
</dbReference>
<dbReference type="NCBIfam" id="TIGR01733">
    <property type="entry name" value="AA-adenyl-dom"/>
    <property type="match status" value="1"/>
</dbReference>
<dbReference type="NCBIfam" id="TIGR01746">
    <property type="entry name" value="Thioester-redct"/>
    <property type="match status" value="1"/>
</dbReference>
<dbReference type="PANTHER" id="PTHR45527:SF1">
    <property type="entry name" value="FATTY ACID SYNTHASE"/>
    <property type="match status" value="1"/>
</dbReference>
<dbReference type="PANTHER" id="PTHR45527">
    <property type="entry name" value="NONRIBOSOMAL PEPTIDE SYNTHETASE"/>
    <property type="match status" value="1"/>
</dbReference>
<dbReference type="Pfam" id="PF00501">
    <property type="entry name" value="AMP-binding"/>
    <property type="match status" value="2"/>
</dbReference>
<dbReference type="Pfam" id="PF13193">
    <property type="entry name" value="AMP-binding_C"/>
    <property type="match status" value="1"/>
</dbReference>
<dbReference type="Pfam" id="PF00668">
    <property type="entry name" value="Condensation"/>
    <property type="match status" value="1"/>
</dbReference>
<dbReference type="Pfam" id="PF07993">
    <property type="entry name" value="NAD_binding_4"/>
    <property type="match status" value="1"/>
</dbReference>
<dbReference type="Pfam" id="PF00550">
    <property type="entry name" value="PP-binding"/>
    <property type="match status" value="2"/>
</dbReference>
<dbReference type="SMART" id="SM00823">
    <property type="entry name" value="PKS_PP"/>
    <property type="match status" value="1"/>
</dbReference>
<dbReference type="SUPFAM" id="SSF56801">
    <property type="entry name" value="Acetyl-CoA synthetase-like"/>
    <property type="match status" value="2"/>
</dbReference>
<dbReference type="SUPFAM" id="SSF47336">
    <property type="entry name" value="ACP-like"/>
    <property type="match status" value="2"/>
</dbReference>
<dbReference type="SUPFAM" id="SSF52777">
    <property type="entry name" value="CoA-dependent acyltransferases"/>
    <property type="match status" value="4"/>
</dbReference>
<dbReference type="SUPFAM" id="SSF51735">
    <property type="entry name" value="NAD(P)-binding Rossmann-fold domains"/>
    <property type="match status" value="1"/>
</dbReference>
<dbReference type="PROSITE" id="PS00455">
    <property type="entry name" value="AMP_BINDING"/>
    <property type="match status" value="2"/>
</dbReference>
<dbReference type="PROSITE" id="PS50075">
    <property type="entry name" value="CARRIER"/>
    <property type="match status" value="1"/>
</dbReference>
<dbReference type="PROSITE" id="PS00012">
    <property type="entry name" value="PHOSPHOPANTETHEINE"/>
    <property type="match status" value="1"/>
</dbReference>
<proteinExistence type="evidence at protein level"/>
<gene>
    <name evidence="10" type="primary">nrp</name>
    <name evidence="10" type="ordered locus">Rv0101</name>
</gene>
<accession>Q10896</accession>
<accession>I6XUF1</accession>
<sequence>MHRVRLSRSQRNLYNGVRQDNNPALYLIGKSYRFRRLELARFLAALHATVLDNPVQLCVLENSGADYPDLVPRLRFGDIVRVGSADEHLQSTWCSGILGKPLVRHTVHTDPNGYVTGLDVHTHHILLDGGATGTIEADLARYLTTDPAGETPSVGAGLAKLREAHRRETAKVEESRGRLSAVVQRELADEAYHGGHGHSVSDAPGTAAKGVLHESATICGNAFDAILTLSEAQRVPLNVLVAAAAVAVDASLRQNTETLLVHTVDNRFGDSDLNVATCLVNSVAQTVRFPPFASVSDVVRTLDRGYVKAVRRRWLREEHYRRMYLAINRTSHVEALTLNFIREPCAPGLRPFLSEVPIATDIGPVEGMTVASVLDEEQRTLNLAIWNRADLPACKTHPKVAERIAAALESMAAMWDRPIAMIVNDWFGIGPDGTRCQGDWPARQPSTPAWFLDSARGVHQFLGRRRFVYPWVAWLVQRGAAPGDVLVFTDDDTDKTIDLLIACHLAGCGYSVCDTADEISVRTNAITEHGDGILVTVVDVAATQLAVVGHDELRKVVDERVTQVTHDALLATKTAYIMPTSGTTGQPKLVRISHGSLAVFCDAISRAYGWGAHDTVLQCAPLTSDISVEEIFGGAACGARLVRSAAMKTGDLAALVDDLVARETTIVDLPTAVWQLLCADGDAIDAIGRSRLRQIVIGGEAIRCSAVDKWLESAASQGISLLSSYGPTEATVVATFLPIVCDQTTMDGALLRLGRPILPNTVFLAFGEVVIVGDLVADGYLGIDGDGFGTVTAADGSRRRAFATGDRVTVDAEGFPVFSGRKDAVVKISGKRVDIAEVTRRIAEDPAVSDVAVELHSGSLGVWFKSQRTREGEQDAAAATRIRLVLVSLGVSSFFVVGVPNIPRKPNGKIDSDNLPRLPQWSAAGLNTAETGQRAAGLSQIWSRQLGRAIGPDSSLLGEGIGSLDLIRILPETRRYLGWRLSLLDLIGADTAANLADYAPTPDAPTGEDRFRPLVAAQRPAAIPLSFAQRRLWFLDQLQRPAPVYNMAVALRLRGYLDTEALGAAVADVVGRHESLRTVFPAVDGVPRQLVIEARRADLGCDIVDATAWPADRLQRAIEEAARHSFDLATEIPLRTWLFRIADDEHVLVAVAHHIAADGWSVAPLTADLSAAYASRCAGRAPDWAPLPVQYVDYTLWQREILGDLDDSDSPIAAQLAYWENALAGMPERLRLPTARPYPPVADQRGASLVVDWPASVQQQVRRIARQHNATSFMVVAAGLAVLLSKLSGSPDVAVGFPIAGRSDPALDNLVGFFVNTLVLRVNLAGDPSFAELLGQVRARSLAAYENQDVPFEVLVDRLKPTRALTHHPLIQVMLAWQDNPVGQLNLGDLQATPMPIDTRTARMDLVFSLAERFSEGSEPAGIGGAVEYRTDVFEAQAIDVLIERLRKVLVAVAAAPERTVSSIDALDGTERARLDEWGNRAVLTAPAPTPVSIPQMLAAQVARIPEAEAVCCGDASMTYRELDEASNRLAHRLAGCGAGPGECVALLFERCAPAVVAMVAVLKTGAAYLPIDPANPPPRVAFMLGDAVPVAAVTTAGLRSRLAGHDLPIIDVVDALAAYPGTPPPMPAAVNLAYILYTSGTTGEPKGVGITHRNVTRLFASLPARLSAAQVWSQCHSYGFDASAWEIWGALLGGGRLVIVPESVAASPNDFHGLLVAEHVSVLTQTPAAVAMLPTQGLESVALVVAGEACPAALVDRWAPGRVMLNAYGPTETTICAAISAPLRPGSGMPPIGVPVSGAALFVLDSWLRPVPAGVAGELYIAGAGVGVGYWRRAGLTASRFVACPFGGSGARMYRTGDLVCWRADGQLEFLGRTDDQVKIRGYRIELGEVATALAELAGVGQAVVIAREDRPGDKRLVGYATEIAPGAVDPAGLRAQLAQRLPGYLVPAAVVVIDALPLTVNGKLDHRALPAPEYGDTNGYRAPAGPVEKTVAGIFARVLGLERVGVDDSFFELGGDSLAAMRVIAAINTTLNADLPVRALLHASSTRGLSQLLGRDARPTSDPRLVSVHGDNPTEVHASDLTLDRFIDADTLATAVNLPGPSPELRTVLLTGATGFLGRYLVLELLRRLDVDGRLICLVRAESDEDARRRLEKTFDSGDPELLRHFKELAADRLEVVAGDKSEPDLGLDQPMWRRLAETVDLIVDSAAMVNAFPYHELFGPNVAGTAELIRIALTTKLKPFTYVSTADVGAAIEPSAFTEDADIRVISPTRTVDGGWAGGYGTSKWAGEVLLREANDLCALPVAVFRCGMILADTSYAGQLNMSDWVTRMVLSLMATGIAPRSFYEPDSEGNRQRAHFDGLPVTFVAEAIAVLGARVAGSSLAGFATYHVMNPHDDGIGLDEYVDWLIEAGYPIRRIDDFAEWLQRFEASLGALPDRQRRHSVLPMLLASNSQRLQPLKPTRGCSAPTDRFRAAVRAAKVGSDKDNPDIPHVSAPTIINYVTNLQLLGLL</sequence>
<keyword id="KW-0002">3D-structure</keyword>
<keyword id="KW-0067">ATP-binding</keyword>
<keyword id="KW-0436">Ligase</keyword>
<keyword id="KW-0547">Nucleotide-binding</keyword>
<keyword id="KW-0596">Phosphopantetheine</keyword>
<keyword id="KW-0597">Phosphoprotein</keyword>
<keyword id="KW-1185">Reference proteome</keyword>
<keyword id="KW-0808">Transferase</keyword>